<sequence>MAKKSLIQREKKRQKLEQKYHLIRRSSKKEISKVRSLSDKWEIYGKLQSPPRNSAPTRLHRRCFSTGRPRANYRDFGLSGHILREMVHACLLPGATRSSW</sequence>
<dbReference type="EMBL" id="AP007232">
    <property type="protein sequence ID" value="BAE47592.1"/>
    <property type="molecule type" value="Genomic_DNA"/>
</dbReference>
<dbReference type="EMBL" id="DQ383816">
    <property type="protein sequence ID" value="ABD47231.1"/>
    <property type="molecule type" value="Genomic_DNA"/>
</dbReference>
<dbReference type="RefSeq" id="YP_398327.1">
    <property type="nucleotide sequence ID" value="NC_007578.1"/>
</dbReference>
<dbReference type="SMR" id="Q332Y0"/>
<dbReference type="GeneID" id="3772787"/>
<dbReference type="KEGG" id="lsv:3772787"/>
<dbReference type="OrthoDB" id="413436at2759"/>
<dbReference type="GO" id="GO:0009507">
    <property type="term" value="C:chloroplast"/>
    <property type="evidence" value="ECO:0007669"/>
    <property type="project" value="UniProtKB-SubCell"/>
</dbReference>
<dbReference type="GO" id="GO:1990904">
    <property type="term" value="C:ribonucleoprotein complex"/>
    <property type="evidence" value="ECO:0007669"/>
    <property type="project" value="UniProtKB-KW"/>
</dbReference>
<dbReference type="GO" id="GO:0005840">
    <property type="term" value="C:ribosome"/>
    <property type="evidence" value="ECO:0007669"/>
    <property type="project" value="UniProtKB-KW"/>
</dbReference>
<dbReference type="GO" id="GO:0019843">
    <property type="term" value="F:rRNA binding"/>
    <property type="evidence" value="ECO:0007669"/>
    <property type="project" value="UniProtKB-UniRule"/>
</dbReference>
<dbReference type="GO" id="GO:0003735">
    <property type="term" value="F:structural constituent of ribosome"/>
    <property type="evidence" value="ECO:0007669"/>
    <property type="project" value="InterPro"/>
</dbReference>
<dbReference type="GO" id="GO:0006412">
    <property type="term" value="P:translation"/>
    <property type="evidence" value="ECO:0007669"/>
    <property type="project" value="UniProtKB-UniRule"/>
</dbReference>
<dbReference type="FunFam" id="1.10.287.1480:FF:000001">
    <property type="entry name" value="30S ribosomal protein S14"/>
    <property type="match status" value="1"/>
</dbReference>
<dbReference type="Gene3D" id="1.10.287.1480">
    <property type="match status" value="1"/>
</dbReference>
<dbReference type="HAMAP" id="MF_00537">
    <property type="entry name" value="Ribosomal_uS14_1"/>
    <property type="match status" value="1"/>
</dbReference>
<dbReference type="InterPro" id="IPR001209">
    <property type="entry name" value="Ribosomal_uS14"/>
</dbReference>
<dbReference type="InterPro" id="IPR023036">
    <property type="entry name" value="Ribosomal_uS14_bac/plastid"/>
</dbReference>
<dbReference type="InterPro" id="IPR018271">
    <property type="entry name" value="Ribosomal_uS14_CS"/>
</dbReference>
<dbReference type="NCBIfam" id="NF006477">
    <property type="entry name" value="PRK08881.1"/>
    <property type="match status" value="1"/>
</dbReference>
<dbReference type="PANTHER" id="PTHR19836">
    <property type="entry name" value="30S RIBOSOMAL PROTEIN S14"/>
    <property type="match status" value="1"/>
</dbReference>
<dbReference type="PANTHER" id="PTHR19836:SF19">
    <property type="entry name" value="SMALL RIBOSOMAL SUBUNIT PROTEIN US14M"/>
    <property type="match status" value="1"/>
</dbReference>
<dbReference type="Pfam" id="PF00253">
    <property type="entry name" value="Ribosomal_S14"/>
    <property type="match status" value="1"/>
</dbReference>
<dbReference type="SUPFAM" id="SSF57716">
    <property type="entry name" value="Glucocorticoid receptor-like (DNA-binding domain)"/>
    <property type="match status" value="1"/>
</dbReference>
<dbReference type="PROSITE" id="PS00527">
    <property type="entry name" value="RIBOSOMAL_S14"/>
    <property type="match status" value="1"/>
</dbReference>
<name>RR14_LACSA</name>
<comment type="function">
    <text evidence="1">Binds 16S rRNA, required for the assembly of 30S particles.</text>
</comment>
<comment type="subunit">
    <text evidence="1">Part of the 30S ribosomal subunit.</text>
</comment>
<comment type="subcellular location">
    <subcellularLocation>
        <location>Plastid</location>
        <location>Chloroplast</location>
    </subcellularLocation>
</comment>
<comment type="similarity">
    <text evidence="1">Belongs to the universal ribosomal protein uS14 family.</text>
</comment>
<accession>Q332Y0</accession>
<keyword id="KW-0150">Chloroplast</keyword>
<keyword id="KW-0934">Plastid</keyword>
<keyword id="KW-0687">Ribonucleoprotein</keyword>
<keyword id="KW-0689">Ribosomal protein</keyword>
<keyword id="KW-0694">RNA-binding</keyword>
<keyword id="KW-0699">rRNA-binding</keyword>
<gene>
    <name evidence="1" type="primary">rps14</name>
</gene>
<geneLocation type="chloroplast"/>
<feature type="chain" id="PRO_0000276683" description="Small ribosomal subunit protein uS14c">
    <location>
        <begin position="1"/>
        <end position="100"/>
    </location>
</feature>
<proteinExistence type="inferred from homology"/>
<reference key="1">
    <citation type="journal article" date="2006" name="Transgenic Res.">
        <title>Efficient and stable transformation of Lactuca sativa L. cv. Cisco (lettuce) plastids.</title>
        <authorList>
            <person name="Kanamoto H."/>
            <person name="Yamashita A."/>
            <person name="Asao H."/>
            <person name="Okumura S."/>
            <person name="Takase H."/>
            <person name="Hattori M."/>
            <person name="Yokota A."/>
            <person name="Tomizawa K."/>
        </authorList>
    </citation>
    <scope>NUCLEOTIDE SEQUENCE [LARGE SCALE GENOMIC DNA]</scope>
    <source>
        <strain>cv. Cisco</strain>
    </source>
</reference>
<reference key="2">
    <citation type="submission" date="2006-01" db="EMBL/GenBank/DDBJ databases">
        <title>A comparison of the first two published chloroplast genomes in Asteraceae: Lactuca and Helianthus.</title>
        <authorList>
            <person name="Timme R.E."/>
            <person name="Kuehl J.V."/>
            <person name="Boore J.L."/>
            <person name="Jansen R.K."/>
        </authorList>
    </citation>
    <scope>NUCLEOTIDE SEQUENCE [LARGE SCALE GENOMIC DNA]</scope>
    <source>
        <strain>cv. Salinas</strain>
    </source>
</reference>
<evidence type="ECO:0000255" key="1">
    <source>
        <dbReference type="HAMAP-Rule" id="MF_00537"/>
    </source>
</evidence>
<evidence type="ECO:0000305" key="2"/>
<protein>
    <recommendedName>
        <fullName evidence="1">Small ribosomal subunit protein uS14c</fullName>
    </recommendedName>
    <alternativeName>
        <fullName evidence="2">30S ribosomal protein S14, chloroplastic</fullName>
    </alternativeName>
</protein>
<organism>
    <name type="scientific">Lactuca sativa</name>
    <name type="common">Garden lettuce</name>
    <dbReference type="NCBI Taxonomy" id="4236"/>
    <lineage>
        <taxon>Eukaryota</taxon>
        <taxon>Viridiplantae</taxon>
        <taxon>Streptophyta</taxon>
        <taxon>Embryophyta</taxon>
        <taxon>Tracheophyta</taxon>
        <taxon>Spermatophyta</taxon>
        <taxon>Magnoliopsida</taxon>
        <taxon>eudicotyledons</taxon>
        <taxon>Gunneridae</taxon>
        <taxon>Pentapetalae</taxon>
        <taxon>asterids</taxon>
        <taxon>campanulids</taxon>
        <taxon>Asterales</taxon>
        <taxon>Asteraceae</taxon>
        <taxon>Cichorioideae</taxon>
        <taxon>Cichorieae</taxon>
        <taxon>Lactucinae</taxon>
        <taxon>Lactuca</taxon>
    </lineage>
</organism>